<feature type="chain" id="PRO_0000294928" description="Small ribosomal subunit protein uS11c">
    <location>
        <begin position="1"/>
        <end position="130"/>
    </location>
</feature>
<evidence type="ECO:0000255" key="1">
    <source>
        <dbReference type="HAMAP-Rule" id="MF_01310"/>
    </source>
</evidence>
<evidence type="ECO:0000305" key="2"/>
<organism>
    <name type="scientific">Bigelowiella natans</name>
    <name type="common">Pedinomonas minutissima</name>
    <name type="synonym">Chlorarachnion sp. (strain CCMP621)</name>
    <dbReference type="NCBI Taxonomy" id="227086"/>
    <lineage>
        <taxon>Eukaryota</taxon>
        <taxon>Sar</taxon>
        <taxon>Rhizaria</taxon>
        <taxon>Cercozoa</taxon>
        <taxon>Chlorarachniophyceae</taxon>
        <taxon>Bigelowiella</taxon>
    </lineage>
</organism>
<protein>
    <recommendedName>
        <fullName evidence="1">Small ribosomal subunit protein uS11c</fullName>
    </recommendedName>
    <alternativeName>
        <fullName evidence="2">30S ribosomal protein S11, chloroplastic</fullName>
    </alternativeName>
</protein>
<dbReference type="EMBL" id="DQ851108">
    <property type="protein sequence ID" value="ABG91421.1"/>
    <property type="molecule type" value="Genomic_DNA"/>
</dbReference>
<dbReference type="RefSeq" id="YP_778589.1">
    <property type="nucleotide sequence ID" value="NC_008408.1"/>
</dbReference>
<dbReference type="SMR" id="Q06J38"/>
<dbReference type="GeneID" id="4353006"/>
<dbReference type="GO" id="GO:0009507">
    <property type="term" value="C:chloroplast"/>
    <property type="evidence" value="ECO:0007669"/>
    <property type="project" value="UniProtKB-SubCell"/>
</dbReference>
<dbReference type="GO" id="GO:1990904">
    <property type="term" value="C:ribonucleoprotein complex"/>
    <property type="evidence" value="ECO:0007669"/>
    <property type="project" value="UniProtKB-KW"/>
</dbReference>
<dbReference type="GO" id="GO:0005840">
    <property type="term" value="C:ribosome"/>
    <property type="evidence" value="ECO:0007669"/>
    <property type="project" value="UniProtKB-KW"/>
</dbReference>
<dbReference type="GO" id="GO:0019843">
    <property type="term" value="F:rRNA binding"/>
    <property type="evidence" value="ECO:0007669"/>
    <property type="project" value="UniProtKB-UniRule"/>
</dbReference>
<dbReference type="GO" id="GO:0003735">
    <property type="term" value="F:structural constituent of ribosome"/>
    <property type="evidence" value="ECO:0007669"/>
    <property type="project" value="InterPro"/>
</dbReference>
<dbReference type="GO" id="GO:0006412">
    <property type="term" value="P:translation"/>
    <property type="evidence" value="ECO:0007669"/>
    <property type="project" value="UniProtKB-UniRule"/>
</dbReference>
<dbReference type="Gene3D" id="3.30.420.80">
    <property type="entry name" value="Ribosomal protein S11"/>
    <property type="match status" value="1"/>
</dbReference>
<dbReference type="HAMAP" id="MF_01310">
    <property type="entry name" value="Ribosomal_uS11"/>
    <property type="match status" value="1"/>
</dbReference>
<dbReference type="InterPro" id="IPR001971">
    <property type="entry name" value="Ribosomal_uS11"/>
</dbReference>
<dbReference type="InterPro" id="IPR036967">
    <property type="entry name" value="Ribosomal_uS11_sf"/>
</dbReference>
<dbReference type="NCBIfam" id="NF003698">
    <property type="entry name" value="PRK05309.1"/>
    <property type="match status" value="1"/>
</dbReference>
<dbReference type="PANTHER" id="PTHR11759">
    <property type="entry name" value="40S RIBOSOMAL PROTEIN S14/30S RIBOSOMAL PROTEIN S11"/>
    <property type="match status" value="1"/>
</dbReference>
<dbReference type="Pfam" id="PF00411">
    <property type="entry name" value="Ribosomal_S11"/>
    <property type="match status" value="1"/>
</dbReference>
<dbReference type="PIRSF" id="PIRSF002131">
    <property type="entry name" value="Ribosomal_S11"/>
    <property type="match status" value="1"/>
</dbReference>
<dbReference type="SUPFAM" id="SSF53137">
    <property type="entry name" value="Translational machinery components"/>
    <property type="match status" value="1"/>
</dbReference>
<sequence>MVKQIRKLTIKKAKWKASDGIVYIYATLNNTIITIVDTSGRVVSWSSAGICGFRGARKASPFAAKTAAEYAARQCINKGINRAQVLVKGLGTGRHTSIRGLQDAGLKISLIRDITTTPHNGCRQPKRRRV</sequence>
<geneLocation type="chloroplast"/>
<proteinExistence type="inferred from homology"/>
<name>RR11_BIGNA</name>
<reference key="1">
    <citation type="journal article" date="2007" name="Mol. Biol. Evol.">
        <title>The complete chloroplast genome of the chlorarachniophyte Bigelowiella natans: evidence for independent origins of chlorarachniophyte and euglenid secondary endosymbionts.</title>
        <authorList>
            <person name="Rogers M.B."/>
            <person name="Gilson P.R."/>
            <person name="Su V."/>
            <person name="McFadden G.I."/>
            <person name="Keeling P.J."/>
        </authorList>
    </citation>
    <scope>NUCLEOTIDE SEQUENCE [LARGE SCALE GENOMIC DNA]</scope>
</reference>
<comment type="subunit">
    <text evidence="1">Part of the 30S ribosomal subunit.</text>
</comment>
<comment type="subcellular location">
    <subcellularLocation>
        <location>Plastid</location>
        <location>Chloroplast</location>
    </subcellularLocation>
</comment>
<comment type="similarity">
    <text evidence="1">Belongs to the universal ribosomal protein uS11 family.</text>
</comment>
<gene>
    <name evidence="1" type="primary">rps11</name>
</gene>
<accession>Q06J38</accession>
<keyword id="KW-0150">Chloroplast</keyword>
<keyword id="KW-0934">Plastid</keyword>
<keyword id="KW-0687">Ribonucleoprotein</keyword>
<keyword id="KW-0689">Ribosomal protein</keyword>
<keyword id="KW-0694">RNA-binding</keyword>
<keyword id="KW-0699">rRNA-binding</keyword>